<sequence length="15" mass="1908">QVRFRQCYFNPISCF</sequence>
<proteinExistence type="evidence at protein level"/>
<reference key="1">
    <citation type="journal article" date="1991" name="Proc. Natl. Acad. Sci. U.S.A.">
        <title>Identification of an allatostatin from the tobacco hornworm Manduca sexta.</title>
        <authorList>
            <person name="Kramer S.J."/>
            <person name="Toschi A."/>
            <person name="Miller C.A."/>
            <person name="Kataoka H."/>
            <person name="Quistad G.B."/>
            <person name="Li J.P."/>
            <person name="Carney R.L."/>
            <person name="Schooley D.A."/>
        </authorList>
    </citation>
    <scope>PROTEIN SEQUENCE</scope>
    <scope>PYROGLUTAMATE FORMATION AT GLN-1</scope>
    <scope>FUNCTION</scope>
    <source>
        <tissue evidence="2">Head</tissue>
    </source>
</reference>
<accession>P42559</accession>
<feature type="peptide" id="PRO_0000043456" description="Allatostatin">
    <location>
        <begin position="1"/>
        <end position="15"/>
    </location>
</feature>
<feature type="modified residue" description="Pyrrolidone carboxylic acid" evidence="1">
    <location>
        <position position="1"/>
    </location>
</feature>
<organism>
    <name type="scientific">Manduca sexta</name>
    <name type="common">Tobacco hawkmoth</name>
    <name type="synonym">Tobacco hornworm</name>
    <dbReference type="NCBI Taxonomy" id="7130"/>
    <lineage>
        <taxon>Eukaryota</taxon>
        <taxon>Metazoa</taxon>
        <taxon>Ecdysozoa</taxon>
        <taxon>Arthropoda</taxon>
        <taxon>Hexapoda</taxon>
        <taxon>Insecta</taxon>
        <taxon>Pterygota</taxon>
        <taxon>Neoptera</taxon>
        <taxon>Endopterygota</taxon>
        <taxon>Lepidoptera</taxon>
        <taxon>Glossata</taxon>
        <taxon>Ditrysia</taxon>
        <taxon>Bombycoidea</taxon>
        <taxon>Sphingidae</taxon>
        <taxon>Sphinginae</taxon>
        <taxon>Sphingini</taxon>
        <taxon>Manduca</taxon>
    </lineage>
</organism>
<keyword id="KW-0903">Direct protein sequencing</keyword>
<keyword id="KW-0527">Neuropeptide</keyword>
<keyword id="KW-0873">Pyrrolidone carboxylic acid</keyword>
<keyword id="KW-0964">Secreted</keyword>
<evidence type="ECO:0000269" key="1">
    <source>
    </source>
</evidence>
<evidence type="ECO:0000303" key="2">
    <source>
    </source>
</evidence>
<evidence type="ECO:0000305" key="3"/>
<dbReference type="PIR" id="A61612">
    <property type="entry name" value="A61612"/>
</dbReference>
<dbReference type="GO" id="GO:0005576">
    <property type="term" value="C:extracellular region"/>
    <property type="evidence" value="ECO:0007669"/>
    <property type="project" value="UniProtKB-SubCell"/>
</dbReference>
<dbReference type="GO" id="GO:0005184">
    <property type="term" value="F:neuropeptide hormone activity"/>
    <property type="evidence" value="ECO:0000314"/>
    <property type="project" value="UniProtKB"/>
</dbReference>
<dbReference type="GO" id="GO:0045968">
    <property type="term" value="P:negative regulation of juvenile hormone biosynthetic process"/>
    <property type="evidence" value="ECO:0000314"/>
    <property type="project" value="UniProtKB"/>
</dbReference>
<dbReference type="GO" id="GO:0007218">
    <property type="term" value="P:neuropeptide signaling pathway"/>
    <property type="evidence" value="ECO:0000304"/>
    <property type="project" value="UniProtKB"/>
</dbReference>
<name>ALLS_MANSE</name>
<comment type="function">
    <text evidence="1">Strongly inhibits juvenile hormone biosynthesis in vitro by the corpora allata from fifth-stadium larvae and adult females.</text>
</comment>
<comment type="subcellular location">
    <subcellularLocation>
        <location>Secreted</location>
    </subcellularLocation>
</comment>
<comment type="similarity">
    <text evidence="3">Belongs to the allatostatin family.</text>
</comment>
<protein>
    <recommendedName>
        <fullName>Allatostatin</fullName>
        <shortName>Mas-AS</shortName>
    </recommendedName>
</protein>